<proteinExistence type="inferred from homology"/>
<name>TRUB_DINSH</name>
<reference key="1">
    <citation type="journal article" date="2010" name="ISME J.">
        <title>The complete genome sequence of the algal symbiont Dinoroseobacter shibae: a hitchhiker's guide to life in the sea.</title>
        <authorList>
            <person name="Wagner-Dobler I."/>
            <person name="Ballhausen B."/>
            <person name="Berger M."/>
            <person name="Brinkhoff T."/>
            <person name="Buchholz I."/>
            <person name="Bunk B."/>
            <person name="Cypionka H."/>
            <person name="Daniel R."/>
            <person name="Drepper T."/>
            <person name="Gerdts G."/>
            <person name="Hahnke S."/>
            <person name="Han C."/>
            <person name="Jahn D."/>
            <person name="Kalhoefer D."/>
            <person name="Kiss H."/>
            <person name="Klenk H.P."/>
            <person name="Kyrpides N."/>
            <person name="Liebl W."/>
            <person name="Liesegang H."/>
            <person name="Meincke L."/>
            <person name="Pati A."/>
            <person name="Petersen J."/>
            <person name="Piekarski T."/>
            <person name="Pommerenke C."/>
            <person name="Pradella S."/>
            <person name="Pukall R."/>
            <person name="Rabus R."/>
            <person name="Stackebrandt E."/>
            <person name="Thole S."/>
            <person name="Thompson L."/>
            <person name="Tielen P."/>
            <person name="Tomasch J."/>
            <person name="von Jan M."/>
            <person name="Wanphrut N."/>
            <person name="Wichels A."/>
            <person name="Zech H."/>
            <person name="Simon M."/>
        </authorList>
    </citation>
    <scope>NUCLEOTIDE SEQUENCE [LARGE SCALE GENOMIC DNA]</scope>
    <source>
        <strain>DSM 16493 / NCIMB 14021 / DFL 12</strain>
    </source>
</reference>
<evidence type="ECO:0000255" key="1">
    <source>
        <dbReference type="HAMAP-Rule" id="MF_01080"/>
    </source>
</evidence>
<evidence type="ECO:0000256" key="2">
    <source>
        <dbReference type="SAM" id="MobiDB-lite"/>
    </source>
</evidence>
<comment type="function">
    <text evidence="1">Responsible for synthesis of pseudouridine from uracil-55 in the psi GC loop of transfer RNAs.</text>
</comment>
<comment type="catalytic activity">
    <reaction evidence="1">
        <text>uridine(55) in tRNA = pseudouridine(55) in tRNA</text>
        <dbReference type="Rhea" id="RHEA:42532"/>
        <dbReference type="Rhea" id="RHEA-COMP:10101"/>
        <dbReference type="Rhea" id="RHEA-COMP:10102"/>
        <dbReference type="ChEBI" id="CHEBI:65314"/>
        <dbReference type="ChEBI" id="CHEBI:65315"/>
        <dbReference type="EC" id="5.4.99.25"/>
    </reaction>
</comment>
<comment type="similarity">
    <text evidence="1">Belongs to the pseudouridine synthase TruB family. Type 1 subfamily.</text>
</comment>
<organism>
    <name type="scientific">Dinoroseobacter shibae (strain DSM 16493 / NCIMB 14021 / DFL 12)</name>
    <dbReference type="NCBI Taxonomy" id="398580"/>
    <lineage>
        <taxon>Bacteria</taxon>
        <taxon>Pseudomonadati</taxon>
        <taxon>Pseudomonadota</taxon>
        <taxon>Alphaproteobacteria</taxon>
        <taxon>Rhodobacterales</taxon>
        <taxon>Roseobacteraceae</taxon>
        <taxon>Dinoroseobacter</taxon>
    </lineage>
</organism>
<gene>
    <name evidence="1" type="primary">truB</name>
    <name type="ordered locus">Dshi_3042</name>
</gene>
<keyword id="KW-0413">Isomerase</keyword>
<keyword id="KW-1185">Reference proteome</keyword>
<keyword id="KW-0819">tRNA processing</keyword>
<feature type="chain" id="PRO_1000084582" description="tRNA pseudouridine synthase B">
    <location>
        <begin position="1"/>
        <end position="304"/>
    </location>
</feature>
<feature type="region of interest" description="Disordered" evidence="2">
    <location>
        <begin position="85"/>
        <end position="105"/>
    </location>
</feature>
<feature type="active site" description="Nucleophile" evidence="1">
    <location>
        <position position="47"/>
    </location>
</feature>
<sequence length="304" mass="32457">MGRRKKGRAVSGWIVIDKPAGLSSNAVVGKVRWAFDAQKAGHAGTLDPEATGVLAIALGEATKTVPFVTDALKAYEFTVRLGQATNTDDGEGEVTETSDARPSDDEIRAALPPFEGDILQVPPQFSAVKIDGERAYARARAGQEMEIAARPLYVDSLTFIARPDPDHVTLEMVCGKGGYVRSIARDLGRALGCFGHVKSLRRTWSGPFELSDATPLETLEDLAKDPALDAHLMPLETGLADLPELPCTPEGAARMRNGNPGMVRASDAEYGETAWASYNGTAVAVGTYRAGELHPTRVFQHGAL</sequence>
<accession>A8LL26</accession>
<dbReference type="EC" id="5.4.99.25" evidence="1"/>
<dbReference type="EMBL" id="CP000830">
    <property type="protein sequence ID" value="ABV94775.1"/>
    <property type="molecule type" value="Genomic_DNA"/>
</dbReference>
<dbReference type="RefSeq" id="WP_012179703.1">
    <property type="nucleotide sequence ID" value="NC_009952.1"/>
</dbReference>
<dbReference type="SMR" id="A8LL26"/>
<dbReference type="STRING" id="398580.Dshi_3042"/>
<dbReference type="KEGG" id="dsh:Dshi_3042"/>
<dbReference type="eggNOG" id="COG0130">
    <property type="taxonomic scope" value="Bacteria"/>
</dbReference>
<dbReference type="HOGENOM" id="CLU_032087_0_3_5"/>
<dbReference type="OrthoDB" id="9802309at2"/>
<dbReference type="Proteomes" id="UP000006833">
    <property type="component" value="Chromosome"/>
</dbReference>
<dbReference type="GO" id="GO:0003723">
    <property type="term" value="F:RNA binding"/>
    <property type="evidence" value="ECO:0007669"/>
    <property type="project" value="InterPro"/>
</dbReference>
<dbReference type="GO" id="GO:0160148">
    <property type="term" value="F:tRNA pseudouridine(55) synthase activity"/>
    <property type="evidence" value="ECO:0007669"/>
    <property type="project" value="UniProtKB-EC"/>
</dbReference>
<dbReference type="GO" id="GO:1990481">
    <property type="term" value="P:mRNA pseudouridine synthesis"/>
    <property type="evidence" value="ECO:0007669"/>
    <property type="project" value="TreeGrafter"/>
</dbReference>
<dbReference type="GO" id="GO:0031119">
    <property type="term" value="P:tRNA pseudouridine synthesis"/>
    <property type="evidence" value="ECO:0007669"/>
    <property type="project" value="UniProtKB-UniRule"/>
</dbReference>
<dbReference type="CDD" id="cd02573">
    <property type="entry name" value="PseudoU_synth_EcTruB"/>
    <property type="match status" value="1"/>
</dbReference>
<dbReference type="Gene3D" id="3.30.2350.10">
    <property type="entry name" value="Pseudouridine synthase"/>
    <property type="match status" value="1"/>
</dbReference>
<dbReference type="HAMAP" id="MF_01080">
    <property type="entry name" value="TruB_bact"/>
    <property type="match status" value="1"/>
</dbReference>
<dbReference type="InterPro" id="IPR020103">
    <property type="entry name" value="PsdUridine_synth_cat_dom_sf"/>
</dbReference>
<dbReference type="InterPro" id="IPR002501">
    <property type="entry name" value="PsdUridine_synth_N"/>
</dbReference>
<dbReference type="InterPro" id="IPR014780">
    <property type="entry name" value="tRNA_psdUridine_synth_TruB"/>
</dbReference>
<dbReference type="InterPro" id="IPR032819">
    <property type="entry name" value="TruB_C"/>
</dbReference>
<dbReference type="NCBIfam" id="TIGR00431">
    <property type="entry name" value="TruB"/>
    <property type="match status" value="1"/>
</dbReference>
<dbReference type="PANTHER" id="PTHR13767:SF2">
    <property type="entry name" value="PSEUDOURIDYLATE SYNTHASE TRUB1"/>
    <property type="match status" value="1"/>
</dbReference>
<dbReference type="PANTHER" id="PTHR13767">
    <property type="entry name" value="TRNA-PSEUDOURIDINE SYNTHASE"/>
    <property type="match status" value="1"/>
</dbReference>
<dbReference type="Pfam" id="PF16198">
    <property type="entry name" value="TruB_C_2"/>
    <property type="match status" value="1"/>
</dbReference>
<dbReference type="Pfam" id="PF01509">
    <property type="entry name" value="TruB_N"/>
    <property type="match status" value="1"/>
</dbReference>
<dbReference type="SUPFAM" id="SSF55120">
    <property type="entry name" value="Pseudouridine synthase"/>
    <property type="match status" value="1"/>
</dbReference>
<protein>
    <recommendedName>
        <fullName evidence="1">tRNA pseudouridine synthase B</fullName>
        <ecNumber evidence="1">5.4.99.25</ecNumber>
    </recommendedName>
    <alternativeName>
        <fullName evidence="1">tRNA pseudouridine(55) synthase</fullName>
        <shortName evidence="1">Psi55 synthase</shortName>
    </alternativeName>
    <alternativeName>
        <fullName evidence="1">tRNA pseudouridylate synthase</fullName>
    </alternativeName>
    <alternativeName>
        <fullName evidence="1">tRNA-uridine isomerase</fullName>
    </alternativeName>
</protein>